<keyword id="KW-1003">Cell membrane</keyword>
<keyword id="KW-1015">Disulfide bond</keyword>
<keyword id="KW-0297">G-protein coupled receptor</keyword>
<keyword id="KW-0325">Glycoprotein</keyword>
<keyword id="KW-0472">Membrane</keyword>
<keyword id="KW-0552">Olfaction</keyword>
<keyword id="KW-0675">Receptor</keyword>
<keyword id="KW-1185">Reference proteome</keyword>
<keyword id="KW-0716">Sensory transduction</keyword>
<keyword id="KW-0807">Transducer</keyword>
<keyword id="KW-0812">Transmembrane</keyword>
<keyword id="KW-1133">Transmembrane helix</keyword>
<name>O14CZ_HUMAN</name>
<gene>
    <name type="primary">OR14C36</name>
    <name type="synonym">OR5BF1</name>
</gene>
<comment type="function">
    <text evidence="3">Odorant receptor.</text>
</comment>
<comment type="subcellular location">
    <subcellularLocation>
        <location>Cell membrane</location>
        <topology>Multi-pass membrane protein</topology>
    </subcellularLocation>
</comment>
<comment type="similarity">
    <text evidence="2">Belongs to the G-protein coupled receptor 1 family.</text>
</comment>
<comment type="online information" name="Human Olfactory Receptor Data Exploratorium (HORDE)">
    <link uri="http://genome.weizmann.ac.il/horde/card/index/symbol:OR14C36"/>
</comment>
<accession>Q8NHC7</accession>
<accession>Q6IEZ6</accession>
<proteinExistence type="inferred from homology"/>
<feature type="chain" id="PRO_0000150589" description="Olfactory receptor 14C36">
    <location>
        <begin position="1"/>
        <end position="312"/>
    </location>
</feature>
<feature type="topological domain" description="Extracellular" evidence="1">
    <location>
        <begin position="1"/>
        <end position="23"/>
    </location>
</feature>
<feature type="transmembrane region" description="Helical; Name=1" evidence="1">
    <location>
        <begin position="24"/>
        <end position="44"/>
    </location>
</feature>
<feature type="topological domain" description="Cytoplasmic" evidence="1">
    <location>
        <begin position="45"/>
        <end position="52"/>
    </location>
</feature>
<feature type="transmembrane region" description="Helical; Name=2" evidence="1">
    <location>
        <begin position="53"/>
        <end position="73"/>
    </location>
</feature>
<feature type="topological domain" description="Extracellular" evidence="1">
    <location>
        <begin position="74"/>
        <end position="97"/>
    </location>
</feature>
<feature type="transmembrane region" description="Helical; Name=3" evidence="1">
    <location>
        <begin position="98"/>
        <end position="118"/>
    </location>
</feature>
<feature type="topological domain" description="Cytoplasmic" evidence="1">
    <location>
        <begin position="119"/>
        <end position="137"/>
    </location>
</feature>
<feature type="transmembrane region" description="Helical; Name=4" evidence="1">
    <location>
        <begin position="138"/>
        <end position="158"/>
    </location>
</feature>
<feature type="topological domain" description="Extracellular" evidence="1">
    <location>
        <begin position="159"/>
        <end position="194"/>
    </location>
</feature>
<feature type="transmembrane region" description="Helical; Name=5" evidence="1">
    <location>
        <begin position="195"/>
        <end position="215"/>
    </location>
</feature>
<feature type="topological domain" description="Cytoplasmic" evidence="1">
    <location>
        <begin position="216"/>
        <end position="235"/>
    </location>
</feature>
<feature type="transmembrane region" description="Helical; Name=6" evidence="1">
    <location>
        <begin position="236"/>
        <end position="256"/>
    </location>
</feature>
<feature type="topological domain" description="Extracellular" evidence="1">
    <location>
        <begin position="257"/>
        <end position="269"/>
    </location>
</feature>
<feature type="transmembrane region" description="Helical; Name=7" evidence="1">
    <location>
        <begin position="270"/>
        <end position="290"/>
    </location>
</feature>
<feature type="topological domain" description="Cytoplasmic" evidence="1">
    <location>
        <begin position="291"/>
        <end position="312"/>
    </location>
</feature>
<feature type="glycosylation site" description="N-linked (GlcNAc...) asparagine" evidence="1">
    <location>
        <position position="3"/>
    </location>
</feature>
<feature type="disulfide bond" evidence="2">
    <location>
        <begin position="95"/>
        <end position="187"/>
    </location>
</feature>
<feature type="sequence variant" id="VAR_062070" description="In dbSNP:rs28448343.">
    <original>Q</original>
    <variation>R</variation>
    <location>
        <position position="141"/>
    </location>
</feature>
<feature type="sequence variant" id="VAR_062071" description="In dbSNP:rs28377739.">
    <original>G</original>
    <variation>R</variation>
    <location>
        <position position="225"/>
    </location>
</feature>
<feature type="sequence variant" id="VAR_062072" description="In dbSNP:rs28545014.">
    <original>D</original>
    <variation>Y</variation>
    <location>
        <position position="231"/>
    </location>
</feature>
<dbReference type="EMBL" id="AB065439">
    <property type="protein sequence ID" value="BAC05706.1"/>
    <property type="molecule type" value="Genomic_DNA"/>
</dbReference>
<dbReference type="EMBL" id="AL450303">
    <property type="status" value="NOT_ANNOTATED_CDS"/>
    <property type="molecule type" value="Genomic_DNA"/>
</dbReference>
<dbReference type="EMBL" id="BK004466">
    <property type="protein sequence ID" value="DAA04864.1"/>
    <property type="molecule type" value="Genomic_DNA"/>
</dbReference>
<dbReference type="CCDS" id="CCDS31112.1"/>
<dbReference type="RefSeq" id="NP_001001918.1">
    <property type="nucleotide sequence ID" value="NM_001001918.1"/>
</dbReference>
<dbReference type="SMR" id="Q8NHC7"/>
<dbReference type="BioGRID" id="126035">
    <property type="interactions" value="1"/>
</dbReference>
<dbReference type="FunCoup" id="Q8NHC7">
    <property type="interactions" value="416"/>
</dbReference>
<dbReference type="IntAct" id="Q8NHC7">
    <property type="interactions" value="1"/>
</dbReference>
<dbReference type="STRING" id="9606.ENSP00000324534"/>
<dbReference type="GlyCosmos" id="Q8NHC7">
    <property type="glycosylation" value="1 site, No reported glycans"/>
</dbReference>
<dbReference type="GlyGen" id="Q8NHC7">
    <property type="glycosylation" value="1 site"/>
</dbReference>
<dbReference type="iPTMnet" id="Q8NHC7"/>
<dbReference type="PhosphoSitePlus" id="Q8NHC7"/>
<dbReference type="BioMuta" id="OR14C36"/>
<dbReference type="DMDM" id="38503051"/>
<dbReference type="MassIVE" id="Q8NHC7"/>
<dbReference type="PaxDb" id="9606-ENSP00000324534"/>
<dbReference type="ProteomicsDB" id="73701"/>
<dbReference type="Antibodypedia" id="57436">
    <property type="antibodies" value="60 antibodies from 16 providers"/>
</dbReference>
<dbReference type="DNASU" id="127066"/>
<dbReference type="Ensembl" id="ENST00000317861.1">
    <property type="protein sequence ID" value="ENSP00000324534.1"/>
    <property type="gene ID" value="ENSG00000177174.1"/>
</dbReference>
<dbReference type="GeneID" id="127066"/>
<dbReference type="KEGG" id="hsa:127066"/>
<dbReference type="MANE-Select" id="ENST00000317861.1">
    <property type="protein sequence ID" value="ENSP00000324534.1"/>
    <property type="RefSeq nucleotide sequence ID" value="NM_001001918.1"/>
    <property type="RefSeq protein sequence ID" value="NP_001001918.1"/>
</dbReference>
<dbReference type="UCSC" id="uc010pzl.2">
    <property type="organism name" value="human"/>
</dbReference>
<dbReference type="AGR" id="HGNC:15026"/>
<dbReference type="CTD" id="127066"/>
<dbReference type="GeneCards" id="OR14C36"/>
<dbReference type="HGNC" id="HGNC:15026">
    <property type="gene designation" value="OR14C36"/>
</dbReference>
<dbReference type="HPA" id="ENSG00000177174">
    <property type="expression patterns" value="Not detected"/>
</dbReference>
<dbReference type="neXtProt" id="NX_Q8NHC7"/>
<dbReference type="OpenTargets" id="ENSG00000177174"/>
<dbReference type="PharmGKB" id="PA162398442"/>
<dbReference type="VEuPathDB" id="HostDB:ENSG00000177174"/>
<dbReference type="eggNOG" id="ENOG502SHXQ">
    <property type="taxonomic scope" value="Eukaryota"/>
</dbReference>
<dbReference type="GeneTree" id="ENSGT01120000271834"/>
<dbReference type="HOGENOM" id="CLU_012526_1_2_1"/>
<dbReference type="InParanoid" id="Q8NHC7"/>
<dbReference type="OMA" id="VNSRICI"/>
<dbReference type="OrthoDB" id="6151005at2759"/>
<dbReference type="PAN-GO" id="Q8NHC7">
    <property type="GO annotations" value="2 GO annotations based on evolutionary models"/>
</dbReference>
<dbReference type="PhylomeDB" id="Q8NHC7"/>
<dbReference type="TreeFam" id="TF337248"/>
<dbReference type="PathwayCommons" id="Q8NHC7"/>
<dbReference type="Reactome" id="R-HSA-9752946">
    <property type="pathway name" value="Expression and translocation of olfactory receptors"/>
</dbReference>
<dbReference type="SignaLink" id="Q8NHC7"/>
<dbReference type="BioGRID-ORCS" id="127066">
    <property type="hits" value="12 hits in 759 CRISPR screens"/>
</dbReference>
<dbReference type="GeneWiki" id="OR5BF1"/>
<dbReference type="GenomeRNAi" id="127066"/>
<dbReference type="Pharos" id="Q8NHC7">
    <property type="development level" value="Tdark"/>
</dbReference>
<dbReference type="PRO" id="PR:Q8NHC7"/>
<dbReference type="Proteomes" id="UP000005640">
    <property type="component" value="Chromosome 1"/>
</dbReference>
<dbReference type="RNAct" id="Q8NHC7">
    <property type="molecule type" value="protein"/>
</dbReference>
<dbReference type="Bgee" id="ENSG00000177174">
    <property type="expression patterns" value="Expressed in hypothalamus and 2 other cell types or tissues"/>
</dbReference>
<dbReference type="GO" id="GO:0005886">
    <property type="term" value="C:plasma membrane"/>
    <property type="evidence" value="ECO:0007669"/>
    <property type="project" value="UniProtKB-SubCell"/>
</dbReference>
<dbReference type="GO" id="GO:0004930">
    <property type="term" value="F:G protein-coupled receptor activity"/>
    <property type="evidence" value="ECO:0007669"/>
    <property type="project" value="UniProtKB-KW"/>
</dbReference>
<dbReference type="GO" id="GO:0005549">
    <property type="term" value="F:odorant binding"/>
    <property type="evidence" value="ECO:0000318"/>
    <property type="project" value="GO_Central"/>
</dbReference>
<dbReference type="GO" id="GO:0004984">
    <property type="term" value="F:olfactory receptor activity"/>
    <property type="evidence" value="ECO:0000318"/>
    <property type="project" value="GO_Central"/>
</dbReference>
<dbReference type="CDD" id="cd15227">
    <property type="entry name" value="7tmA_OR14-like"/>
    <property type="match status" value="1"/>
</dbReference>
<dbReference type="FunFam" id="1.10.1220.70:FF:000001">
    <property type="entry name" value="Olfactory receptor"/>
    <property type="match status" value="1"/>
</dbReference>
<dbReference type="FunFam" id="1.20.1070.10:FF:000037">
    <property type="entry name" value="Olfactory receptor"/>
    <property type="match status" value="1"/>
</dbReference>
<dbReference type="Gene3D" id="1.20.1070.10">
    <property type="entry name" value="Rhodopsin 7-helix transmembrane proteins"/>
    <property type="match status" value="1"/>
</dbReference>
<dbReference type="InterPro" id="IPR000276">
    <property type="entry name" value="GPCR_Rhodpsn"/>
</dbReference>
<dbReference type="InterPro" id="IPR017452">
    <property type="entry name" value="GPCR_Rhodpsn_7TM"/>
</dbReference>
<dbReference type="InterPro" id="IPR000725">
    <property type="entry name" value="Olfact_rcpt"/>
</dbReference>
<dbReference type="InterPro" id="IPR050516">
    <property type="entry name" value="Olfactory_GPCR"/>
</dbReference>
<dbReference type="PANTHER" id="PTHR26452">
    <property type="entry name" value="OLFACTORY RECEPTOR"/>
    <property type="match status" value="1"/>
</dbReference>
<dbReference type="Pfam" id="PF13853">
    <property type="entry name" value="7tm_4"/>
    <property type="match status" value="1"/>
</dbReference>
<dbReference type="PRINTS" id="PR00237">
    <property type="entry name" value="GPCRRHODOPSN"/>
</dbReference>
<dbReference type="PRINTS" id="PR00245">
    <property type="entry name" value="OLFACTORYR"/>
</dbReference>
<dbReference type="SUPFAM" id="SSF81321">
    <property type="entry name" value="Family A G protein-coupled receptor-like"/>
    <property type="match status" value="1"/>
</dbReference>
<dbReference type="PROSITE" id="PS50262">
    <property type="entry name" value="G_PROTEIN_RECEP_F1_2"/>
    <property type="match status" value="1"/>
</dbReference>
<sequence>MPNSTTVMEFLLMRFSDVWTLQILHSASFFMLYLVTLMGNILIVTVTTCDSSLHMPMYFFLRNLSILDACYISVTVPTSCVNSLLDSTTISKAGCVAQVFLVVFFVYVELLFLTIMAHDRYVAVCQPLHYPVIVNSRICIQMTLASLLSGLVYAGMHTGSTFQLPFCRSNVIHQFFCDIPSLLKLSCSDTFSNEVMIVVSALGVGGGCFIFIIRSYIHIFSTVLGFPRGADRTKAFSTCIPHILVVSVFLSSCSSVYLRPPAIPAATQDLILSGFYSIMPPLFNPIIYSLRNKQIKVAIKKIMKRIFYSENV</sequence>
<organism>
    <name type="scientific">Homo sapiens</name>
    <name type="common">Human</name>
    <dbReference type="NCBI Taxonomy" id="9606"/>
    <lineage>
        <taxon>Eukaryota</taxon>
        <taxon>Metazoa</taxon>
        <taxon>Chordata</taxon>
        <taxon>Craniata</taxon>
        <taxon>Vertebrata</taxon>
        <taxon>Euteleostomi</taxon>
        <taxon>Mammalia</taxon>
        <taxon>Eutheria</taxon>
        <taxon>Euarchontoglires</taxon>
        <taxon>Primates</taxon>
        <taxon>Haplorrhini</taxon>
        <taxon>Catarrhini</taxon>
        <taxon>Hominidae</taxon>
        <taxon>Homo</taxon>
    </lineage>
</organism>
<evidence type="ECO:0000255" key="1"/>
<evidence type="ECO:0000255" key="2">
    <source>
        <dbReference type="PROSITE-ProRule" id="PRU00521"/>
    </source>
</evidence>
<evidence type="ECO:0000305" key="3"/>
<protein>
    <recommendedName>
        <fullName>Olfactory receptor 14C36</fullName>
    </recommendedName>
    <alternativeName>
        <fullName>Olfactory receptor 5BF1</fullName>
    </alternativeName>
    <alternativeName>
        <fullName>Olfactory receptor OR1-59</fullName>
    </alternativeName>
</protein>
<reference key="1">
    <citation type="submission" date="2001-07" db="EMBL/GenBank/DDBJ databases">
        <title>Genome-wide discovery and analysis of human seven transmembrane helix receptor genes.</title>
        <authorList>
            <person name="Suwa M."/>
            <person name="Sato T."/>
            <person name="Okouchi I."/>
            <person name="Arita M."/>
            <person name="Futami K."/>
            <person name="Matsumoto S."/>
            <person name="Tsutsumi S."/>
            <person name="Aburatani H."/>
            <person name="Asai K."/>
            <person name="Akiyama Y."/>
        </authorList>
    </citation>
    <scope>NUCLEOTIDE SEQUENCE [GENOMIC DNA]</scope>
</reference>
<reference key="2">
    <citation type="journal article" date="2006" name="Nature">
        <title>The DNA sequence and biological annotation of human chromosome 1.</title>
        <authorList>
            <person name="Gregory S.G."/>
            <person name="Barlow K.F."/>
            <person name="McLay K.E."/>
            <person name="Kaul R."/>
            <person name="Swarbreck D."/>
            <person name="Dunham A."/>
            <person name="Scott C.E."/>
            <person name="Howe K.L."/>
            <person name="Woodfine K."/>
            <person name="Spencer C.C.A."/>
            <person name="Jones M.C."/>
            <person name="Gillson C."/>
            <person name="Searle S."/>
            <person name="Zhou Y."/>
            <person name="Kokocinski F."/>
            <person name="McDonald L."/>
            <person name="Evans R."/>
            <person name="Phillips K."/>
            <person name="Atkinson A."/>
            <person name="Cooper R."/>
            <person name="Jones C."/>
            <person name="Hall R.E."/>
            <person name="Andrews T.D."/>
            <person name="Lloyd C."/>
            <person name="Ainscough R."/>
            <person name="Almeida J.P."/>
            <person name="Ambrose K.D."/>
            <person name="Anderson F."/>
            <person name="Andrew R.W."/>
            <person name="Ashwell R.I.S."/>
            <person name="Aubin K."/>
            <person name="Babbage A.K."/>
            <person name="Bagguley C.L."/>
            <person name="Bailey J."/>
            <person name="Beasley H."/>
            <person name="Bethel G."/>
            <person name="Bird C.P."/>
            <person name="Bray-Allen S."/>
            <person name="Brown J.Y."/>
            <person name="Brown A.J."/>
            <person name="Buckley D."/>
            <person name="Burton J."/>
            <person name="Bye J."/>
            <person name="Carder C."/>
            <person name="Chapman J.C."/>
            <person name="Clark S.Y."/>
            <person name="Clarke G."/>
            <person name="Clee C."/>
            <person name="Cobley V."/>
            <person name="Collier R.E."/>
            <person name="Corby N."/>
            <person name="Coville G.J."/>
            <person name="Davies J."/>
            <person name="Deadman R."/>
            <person name="Dunn M."/>
            <person name="Earthrowl M."/>
            <person name="Ellington A.G."/>
            <person name="Errington H."/>
            <person name="Frankish A."/>
            <person name="Frankland J."/>
            <person name="French L."/>
            <person name="Garner P."/>
            <person name="Garnett J."/>
            <person name="Gay L."/>
            <person name="Ghori M.R.J."/>
            <person name="Gibson R."/>
            <person name="Gilby L.M."/>
            <person name="Gillett W."/>
            <person name="Glithero R.J."/>
            <person name="Grafham D.V."/>
            <person name="Griffiths C."/>
            <person name="Griffiths-Jones S."/>
            <person name="Grocock R."/>
            <person name="Hammond S."/>
            <person name="Harrison E.S.I."/>
            <person name="Hart E."/>
            <person name="Haugen E."/>
            <person name="Heath P.D."/>
            <person name="Holmes S."/>
            <person name="Holt K."/>
            <person name="Howden P.J."/>
            <person name="Hunt A.R."/>
            <person name="Hunt S.E."/>
            <person name="Hunter G."/>
            <person name="Isherwood J."/>
            <person name="James R."/>
            <person name="Johnson C."/>
            <person name="Johnson D."/>
            <person name="Joy A."/>
            <person name="Kay M."/>
            <person name="Kershaw J.K."/>
            <person name="Kibukawa M."/>
            <person name="Kimberley A.M."/>
            <person name="King A."/>
            <person name="Knights A.J."/>
            <person name="Lad H."/>
            <person name="Laird G."/>
            <person name="Lawlor S."/>
            <person name="Leongamornlert D.A."/>
            <person name="Lloyd D.M."/>
            <person name="Loveland J."/>
            <person name="Lovell J."/>
            <person name="Lush M.J."/>
            <person name="Lyne R."/>
            <person name="Martin S."/>
            <person name="Mashreghi-Mohammadi M."/>
            <person name="Matthews L."/>
            <person name="Matthews N.S.W."/>
            <person name="McLaren S."/>
            <person name="Milne S."/>
            <person name="Mistry S."/>
            <person name="Moore M.J.F."/>
            <person name="Nickerson T."/>
            <person name="O'Dell C.N."/>
            <person name="Oliver K."/>
            <person name="Palmeiri A."/>
            <person name="Palmer S.A."/>
            <person name="Parker A."/>
            <person name="Patel D."/>
            <person name="Pearce A.V."/>
            <person name="Peck A.I."/>
            <person name="Pelan S."/>
            <person name="Phelps K."/>
            <person name="Phillimore B.J."/>
            <person name="Plumb R."/>
            <person name="Rajan J."/>
            <person name="Raymond C."/>
            <person name="Rouse G."/>
            <person name="Saenphimmachak C."/>
            <person name="Sehra H.K."/>
            <person name="Sheridan E."/>
            <person name="Shownkeen R."/>
            <person name="Sims S."/>
            <person name="Skuce C.D."/>
            <person name="Smith M."/>
            <person name="Steward C."/>
            <person name="Subramanian S."/>
            <person name="Sycamore N."/>
            <person name="Tracey A."/>
            <person name="Tromans A."/>
            <person name="Van Helmond Z."/>
            <person name="Wall M."/>
            <person name="Wallis J.M."/>
            <person name="White S."/>
            <person name="Whitehead S.L."/>
            <person name="Wilkinson J.E."/>
            <person name="Willey D.L."/>
            <person name="Williams H."/>
            <person name="Wilming L."/>
            <person name="Wray P.W."/>
            <person name="Wu Z."/>
            <person name="Coulson A."/>
            <person name="Vaudin M."/>
            <person name="Sulston J.E."/>
            <person name="Durbin R.M."/>
            <person name="Hubbard T."/>
            <person name="Wooster R."/>
            <person name="Dunham I."/>
            <person name="Carter N.P."/>
            <person name="McVean G."/>
            <person name="Ross M.T."/>
            <person name="Harrow J."/>
            <person name="Olson M.V."/>
            <person name="Beck S."/>
            <person name="Rogers J."/>
            <person name="Bentley D.R."/>
        </authorList>
    </citation>
    <scope>NUCLEOTIDE SEQUENCE [LARGE SCALE GENOMIC DNA]</scope>
</reference>
<reference key="3">
    <citation type="journal article" date="2004" name="Proc. Natl. Acad. Sci. U.S.A.">
        <title>The human olfactory receptor gene family.</title>
        <authorList>
            <person name="Malnic B."/>
            <person name="Godfrey P.A."/>
            <person name="Buck L.B."/>
        </authorList>
    </citation>
    <scope>IDENTIFICATION</scope>
</reference>
<reference key="4">
    <citation type="journal article" date="2004" name="Proc. Natl. Acad. Sci. U.S.A.">
        <authorList>
            <person name="Malnic B."/>
            <person name="Godfrey P.A."/>
            <person name="Buck L.B."/>
        </authorList>
    </citation>
    <scope>ERRATUM OF PUBMED:14983052</scope>
</reference>